<feature type="chain" id="PRO_0000365988" description="Eukaryotic translation initiation factor 3 subunit E">
    <location>
        <begin position="1"/>
        <end position="446"/>
    </location>
</feature>
<feature type="domain" description="PCI" evidence="2">
    <location>
        <begin position="240"/>
        <end position="420"/>
    </location>
</feature>
<dbReference type="EMBL" id="CM001234">
    <property type="protein sequence ID" value="EHA50323.1"/>
    <property type="molecule type" value="Genomic_DNA"/>
</dbReference>
<dbReference type="RefSeq" id="XP_003716642.1">
    <property type="nucleotide sequence ID" value="XM_003716594.1"/>
</dbReference>
<dbReference type="SMR" id="A4R796"/>
<dbReference type="STRING" id="242507.A4R796"/>
<dbReference type="EnsemblFungi" id="MGG_03317T0">
    <property type="protein sequence ID" value="MGG_03317T0"/>
    <property type="gene ID" value="MGG_03317"/>
</dbReference>
<dbReference type="GeneID" id="2676671"/>
<dbReference type="KEGG" id="mgr:MGG_03317"/>
<dbReference type="VEuPathDB" id="FungiDB:MGG_03317"/>
<dbReference type="eggNOG" id="KOG2758">
    <property type="taxonomic scope" value="Eukaryota"/>
</dbReference>
<dbReference type="HOGENOM" id="CLU_031132_0_0_1"/>
<dbReference type="InParanoid" id="A4R796"/>
<dbReference type="OMA" id="NCPWILR"/>
<dbReference type="OrthoDB" id="417252at2759"/>
<dbReference type="Proteomes" id="UP000009058">
    <property type="component" value="Chromosome 4"/>
</dbReference>
<dbReference type="GO" id="GO:0016282">
    <property type="term" value="C:eukaryotic 43S preinitiation complex"/>
    <property type="evidence" value="ECO:0007669"/>
    <property type="project" value="UniProtKB-UniRule"/>
</dbReference>
<dbReference type="GO" id="GO:0033290">
    <property type="term" value="C:eukaryotic 48S preinitiation complex"/>
    <property type="evidence" value="ECO:0007669"/>
    <property type="project" value="UniProtKB-UniRule"/>
</dbReference>
<dbReference type="GO" id="GO:0071540">
    <property type="term" value="C:eukaryotic translation initiation factor 3 complex, eIF3e"/>
    <property type="evidence" value="ECO:0007669"/>
    <property type="project" value="UniProtKB-UniRule"/>
</dbReference>
<dbReference type="GO" id="GO:0003743">
    <property type="term" value="F:translation initiation factor activity"/>
    <property type="evidence" value="ECO:0007669"/>
    <property type="project" value="UniProtKB-UniRule"/>
</dbReference>
<dbReference type="GO" id="GO:0001732">
    <property type="term" value="P:formation of cytoplasmic translation initiation complex"/>
    <property type="evidence" value="ECO:0007669"/>
    <property type="project" value="UniProtKB-UniRule"/>
</dbReference>
<dbReference type="CDD" id="cd21378">
    <property type="entry name" value="eIF3E"/>
    <property type="match status" value="1"/>
</dbReference>
<dbReference type="HAMAP" id="MF_03004">
    <property type="entry name" value="eIF3e"/>
    <property type="match status" value="1"/>
</dbReference>
<dbReference type="InterPro" id="IPR016650">
    <property type="entry name" value="eIF3e"/>
</dbReference>
<dbReference type="InterPro" id="IPR019010">
    <property type="entry name" value="eIF3e_N"/>
</dbReference>
<dbReference type="InterPro" id="IPR000717">
    <property type="entry name" value="PCI_dom"/>
</dbReference>
<dbReference type="InterPro" id="IPR036390">
    <property type="entry name" value="WH_DNA-bd_sf"/>
</dbReference>
<dbReference type="PANTHER" id="PTHR10317">
    <property type="entry name" value="EUKARYOTIC TRANSLATION INITIATION FACTOR 3 SUBUNIT E"/>
    <property type="match status" value="1"/>
</dbReference>
<dbReference type="Pfam" id="PF09440">
    <property type="entry name" value="eIF3_N"/>
    <property type="match status" value="1"/>
</dbReference>
<dbReference type="Pfam" id="PF21357">
    <property type="entry name" value="EIF3E_C"/>
    <property type="match status" value="1"/>
</dbReference>
<dbReference type="Pfam" id="PF01399">
    <property type="entry name" value="PCI"/>
    <property type="match status" value="1"/>
</dbReference>
<dbReference type="PIRSF" id="PIRSF016255">
    <property type="entry name" value="eIF3e_su6"/>
    <property type="match status" value="1"/>
</dbReference>
<dbReference type="SMART" id="SM01186">
    <property type="entry name" value="eIF3_N"/>
    <property type="match status" value="1"/>
</dbReference>
<dbReference type="SMART" id="SM00088">
    <property type="entry name" value="PINT"/>
    <property type="match status" value="1"/>
</dbReference>
<dbReference type="SUPFAM" id="SSF46785">
    <property type="entry name" value="Winged helix' DNA-binding domain"/>
    <property type="match status" value="1"/>
</dbReference>
<dbReference type="PROSITE" id="PS50250">
    <property type="entry name" value="PCI"/>
    <property type="match status" value="1"/>
</dbReference>
<protein>
    <recommendedName>
        <fullName evidence="1">Eukaryotic translation initiation factor 3 subunit E</fullName>
        <shortName evidence="1">eIF3e</shortName>
    </recommendedName>
</protein>
<sequence length="446" mass="51491">MAPSAESEDNSLAQFDLLPKLVKNLDRHLIFPLLDAASAQYYDEETNEPRDVDKAREMTKAKFELLKKTNMTDYVANLHCELEGTDEPPAEYAEKRQKVIKQLQDFEDSVSKLRDLLDREEVISNLRSDKVANLEFLKKEHDVTIEMVTALYDFGNFQYSCGNYPAAAELLYQFRVLSTDNDKVSAATWGKLASEILSGNWEGAMEELKKVREDIDSRLFNNPLAQLQHRTWLTHWALFPLFNDENSREALLEMFFSPNYINTIQTSCPWILRYLAVVVIAGRGRARNTGAYQKQLKDVVRIVKQEGYEYSDPVTDFVRALYIDFDFEEAQRQLPRAEEVLRTDFFLMSIGDSFVDAARHLFFESYCKIHARIDLKRLSEQLGLNVDEGEKWIVNLIRDTRLDAKIDFQEGTVVMNHPNSSVYQQVIERTKGGFFRTQVLSAAVAR</sequence>
<proteinExistence type="inferred from homology"/>
<name>EIF3E_PYRO7</name>
<reference key="1">
    <citation type="journal article" date="2005" name="Nature">
        <title>The genome sequence of the rice blast fungus Magnaporthe grisea.</title>
        <authorList>
            <person name="Dean R.A."/>
            <person name="Talbot N.J."/>
            <person name="Ebbole D.J."/>
            <person name="Farman M.L."/>
            <person name="Mitchell T.K."/>
            <person name="Orbach M.J."/>
            <person name="Thon M.R."/>
            <person name="Kulkarni R."/>
            <person name="Xu J.-R."/>
            <person name="Pan H."/>
            <person name="Read N.D."/>
            <person name="Lee Y.-H."/>
            <person name="Carbone I."/>
            <person name="Brown D."/>
            <person name="Oh Y.Y."/>
            <person name="Donofrio N."/>
            <person name="Jeong J.S."/>
            <person name="Soanes D.M."/>
            <person name="Djonovic S."/>
            <person name="Kolomiets E."/>
            <person name="Rehmeyer C."/>
            <person name="Li W."/>
            <person name="Harding M."/>
            <person name="Kim S."/>
            <person name="Lebrun M.-H."/>
            <person name="Bohnert H."/>
            <person name="Coughlan S."/>
            <person name="Butler J."/>
            <person name="Calvo S.E."/>
            <person name="Ma L.-J."/>
            <person name="Nicol R."/>
            <person name="Purcell S."/>
            <person name="Nusbaum C."/>
            <person name="Galagan J.E."/>
            <person name="Birren B.W."/>
        </authorList>
    </citation>
    <scope>NUCLEOTIDE SEQUENCE [LARGE SCALE GENOMIC DNA]</scope>
    <source>
        <strain>70-15 / ATCC MYA-4617 / FGSC 8958</strain>
    </source>
</reference>
<accession>A4R796</accession>
<accession>G4N979</accession>
<gene>
    <name evidence="1" type="primary">INT6</name>
    <name type="ORF">MGG_03317</name>
</gene>
<keyword id="KW-0963">Cytoplasm</keyword>
<keyword id="KW-0396">Initiation factor</keyword>
<keyword id="KW-0648">Protein biosynthesis</keyword>
<keyword id="KW-1185">Reference proteome</keyword>
<evidence type="ECO:0000255" key="1">
    <source>
        <dbReference type="HAMAP-Rule" id="MF_03004"/>
    </source>
</evidence>
<evidence type="ECO:0000255" key="2">
    <source>
        <dbReference type="PROSITE-ProRule" id="PRU01185"/>
    </source>
</evidence>
<comment type="function">
    <text evidence="1">Component of the eukaryotic translation initiation factor 3 (eIF-3) complex, which is involved in protein synthesis of a specialized repertoire of mRNAs and, together with other initiation factors, stimulates binding of mRNA and methionyl-tRNAi to the 40S ribosome. The eIF-3 complex specifically targets and initiates translation of a subset of mRNAs involved in cell proliferation.</text>
</comment>
<comment type="subunit">
    <text evidence="1">Component of the eukaryotic translation initiation factor 3 (eIF-3) complex.</text>
</comment>
<comment type="subcellular location">
    <subcellularLocation>
        <location evidence="1">Cytoplasm</location>
    </subcellularLocation>
</comment>
<comment type="similarity">
    <text evidence="1">Belongs to the eIF-3 subunit E family.</text>
</comment>
<organism>
    <name type="scientific">Pyricularia oryzae (strain 70-15 / ATCC MYA-4617 / FGSC 8958)</name>
    <name type="common">Rice blast fungus</name>
    <name type="synonym">Magnaporthe oryzae</name>
    <dbReference type="NCBI Taxonomy" id="242507"/>
    <lineage>
        <taxon>Eukaryota</taxon>
        <taxon>Fungi</taxon>
        <taxon>Dikarya</taxon>
        <taxon>Ascomycota</taxon>
        <taxon>Pezizomycotina</taxon>
        <taxon>Sordariomycetes</taxon>
        <taxon>Sordariomycetidae</taxon>
        <taxon>Magnaporthales</taxon>
        <taxon>Pyriculariaceae</taxon>
        <taxon>Pyricularia</taxon>
    </lineage>
</organism>